<proteinExistence type="inferred from homology"/>
<gene>
    <name type="ordered locus">BCQ_1220</name>
</gene>
<reference key="1">
    <citation type="journal article" date="2009" name="J. Bacteriol.">
        <title>Complete genome sequence of the extremophilic Bacillus cereus strain Q1 with industrial applications.</title>
        <authorList>
            <person name="Xiong Z."/>
            <person name="Jiang Y."/>
            <person name="Qi D."/>
            <person name="Lu H."/>
            <person name="Yang F."/>
            <person name="Yang J."/>
            <person name="Chen L."/>
            <person name="Sun L."/>
            <person name="Xu X."/>
            <person name="Xue Y."/>
            <person name="Zhu Y."/>
            <person name="Jin Q."/>
        </authorList>
    </citation>
    <scope>NUCLEOTIDE SEQUENCE [LARGE SCALE GENOMIC DNA]</scope>
    <source>
        <strain>Q1</strain>
    </source>
</reference>
<keyword id="KW-0547">Nucleotide-binding</keyword>
<sequence length="163" mass="18387">MAKDSSFDIVSKVELPEVTNAINTALKEIQNRYDFKGSKSDIKLEKEVLVLTSDDEFKLEQVKDVLISKLVKRNVPIKNLDYGKVEAAAGNTVRQRATLQQGIDKDNAKKINNIIKEMKLKVKTQVQDDQVRVTAKSRDDLQAVIAAVRSADLPIDVQFINYR</sequence>
<dbReference type="EMBL" id="CP000227">
    <property type="protein sequence ID" value="ACM11650.1"/>
    <property type="molecule type" value="Genomic_DNA"/>
</dbReference>
<dbReference type="SMR" id="B9ITG8"/>
<dbReference type="KEGG" id="bcq:BCQ_1220"/>
<dbReference type="HOGENOM" id="CLU_099839_1_0_9"/>
<dbReference type="Proteomes" id="UP000000441">
    <property type="component" value="Chromosome"/>
</dbReference>
<dbReference type="GO" id="GO:0005829">
    <property type="term" value="C:cytosol"/>
    <property type="evidence" value="ECO:0007669"/>
    <property type="project" value="TreeGrafter"/>
</dbReference>
<dbReference type="GO" id="GO:0000166">
    <property type="term" value="F:nucleotide binding"/>
    <property type="evidence" value="ECO:0007669"/>
    <property type="project" value="TreeGrafter"/>
</dbReference>
<dbReference type="CDD" id="cd11740">
    <property type="entry name" value="YajQ_like"/>
    <property type="match status" value="1"/>
</dbReference>
<dbReference type="FunFam" id="3.30.70.990:FF:000002">
    <property type="entry name" value="UPF0234 protein LEP1GSC067_4943"/>
    <property type="match status" value="1"/>
</dbReference>
<dbReference type="FunFam" id="3.30.70.860:FF:000003">
    <property type="entry name" value="UPF0234 protein YBT020_06460"/>
    <property type="match status" value="1"/>
</dbReference>
<dbReference type="Gene3D" id="3.30.70.860">
    <property type="match status" value="1"/>
</dbReference>
<dbReference type="Gene3D" id="3.30.70.990">
    <property type="entry name" value="YajQ-like, domain 2"/>
    <property type="match status" value="1"/>
</dbReference>
<dbReference type="HAMAP" id="MF_00632">
    <property type="entry name" value="YajQ"/>
    <property type="match status" value="1"/>
</dbReference>
<dbReference type="InterPro" id="IPR007551">
    <property type="entry name" value="DUF520"/>
</dbReference>
<dbReference type="InterPro" id="IPR035571">
    <property type="entry name" value="UPF0234-like_C"/>
</dbReference>
<dbReference type="InterPro" id="IPR035570">
    <property type="entry name" value="UPF0234_N"/>
</dbReference>
<dbReference type="InterPro" id="IPR036183">
    <property type="entry name" value="YajQ-like_sf"/>
</dbReference>
<dbReference type="NCBIfam" id="NF003819">
    <property type="entry name" value="PRK05412.1"/>
    <property type="match status" value="1"/>
</dbReference>
<dbReference type="PANTHER" id="PTHR30476">
    <property type="entry name" value="UPF0234 PROTEIN YAJQ"/>
    <property type="match status" value="1"/>
</dbReference>
<dbReference type="PANTHER" id="PTHR30476:SF0">
    <property type="entry name" value="UPF0234 PROTEIN YAJQ"/>
    <property type="match status" value="1"/>
</dbReference>
<dbReference type="Pfam" id="PF04461">
    <property type="entry name" value="DUF520"/>
    <property type="match status" value="1"/>
</dbReference>
<dbReference type="SUPFAM" id="SSF89963">
    <property type="entry name" value="YajQ-like"/>
    <property type="match status" value="2"/>
</dbReference>
<feature type="chain" id="PRO_1000147282" description="Nucleotide-binding protein BCQ_1220">
    <location>
        <begin position="1"/>
        <end position="163"/>
    </location>
</feature>
<name>Y1220_BACCQ</name>
<comment type="function">
    <text evidence="1">Nucleotide-binding protein.</text>
</comment>
<comment type="similarity">
    <text evidence="1">Belongs to the YajQ family.</text>
</comment>
<evidence type="ECO:0000255" key="1">
    <source>
        <dbReference type="HAMAP-Rule" id="MF_00632"/>
    </source>
</evidence>
<organism>
    <name type="scientific">Bacillus cereus (strain Q1)</name>
    <dbReference type="NCBI Taxonomy" id="361100"/>
    <lineage>
        <taxon>Bacteria</taxon>
        <taxon>Bacillati</taxon>
        <taxon>Bacillota</taxon>
        <taxon>Bacilli</taxon>
        <taxon>Bacillales</taxon>
        <taxon>Bacillaceae</taxon>
        <taxon>Bacillus</taxon>
        <taxon>Bacillus cereus group</taxon>
    </lineage>
</organism>
<protein>
    <recommendedName>
        <fullName evidence="1">Nucleotide-binding protein BCQ_1220</fullName>
    </recommendedName>
</protein>
<accession>B9ITG8</accession>